<sequence length="67" mass="7593">MASLKKSLFLVLFLGMVSLSICDKEKREGENEEEEEEHEEESEEKRGLLSFLPKVIGVIGHLIHPPS</sequence>
<dbReference type="EMBL" id="EU912529">
    <property type="protein sequence ID" value="ACH53447.1"/>
    <property type="molecule type" value="mRNA"/>
</dbReference>
<dbReference type="GO" id="GO:0005576">
    <property type="term" value="C:extracellular region"/>
    <property type="evidence" value="ECO:0000314"/>
    <property type="project" value="UniProtKB"/>
</dbReference>
<dbReference type="GO" id="GO:0042742">
    <property type="term" value="P:defense response to bacterium"/>
    <property type="evidence" value="ECO:0000314"/>
    <property type="project" value="UniProtKB"/>
</dbReference>
<dbReference type="GO" id="GO:0050830">
    <property type="term" value="P:defense response to Gram-positive bacterium"/>
    <property type="evidence" value="ECO:0000314"/>
    <property type="project" value="UniProtKB"/>
</dbReference>
<dbReference type="GO" id="GO:0051001">
    <property type="term" value="P:negative regulation of nitric-oxide synthase activity"/>
    <property type="evidence" value="ECO:0000314"/>
    <property type="project" value="UniProtKB"/>
</dbReference>
<dbReference type="InterPro" id="IPR004275">
    <property type="entry name" value="Frog_antimicrobial_propeptide"/>
</dbReference>
<dbReference type="InterPro" id="IPR016322">
    <property type="entry name" value="FSAP"/>
</dbReference>
<dbReference type="Pfam" id="PF03032">
    <property type="entry name" value="FSAP_sig_propep"/>
    <property type="match status" value="1"/>
</dbReference>
<dbReference type="PIRSF" id="PIRSF001822">
    <property type="entry name" value="Dermaseptin_precursor"/>
    <property type="match status" value="1"/>
</dbReference>
<keyword id="KW-0027">Amidation</keyword>
<keyword id="KW-0878">Amphibian defense peptide</keyword>
<keyword id="KW-0044">Antibiotic</keyword>
<keyword id="KW-0929">Antimicrobial</keyword>
<keyword id="KW-0903">Direct protein sequencing</keyword>
<keyword id="KW-0964">Secreted</keyword>
<keyword id="KW-0732">Signal</keyword>
<organism>
    <name type="scientific">Litoria fallax</name>
    <name type="common">Eastern dwarf tree frog</name>
    <name type="synonym">Hylomantis fallax</name>
    <dbReference type="NCBI Taxonomy" id="115422"/>
    <lineage>
        <taxon>Eukaryota</taxon>
        <taxon>Metazoa</taxon>
        <taxon>Chordata</taxon>
        <taxon>Craniata</taxon>
        <taxon>Vertebrata</taxon>
        <taxon>Euteleostomi</taxon>
        <taxon>Amphibia</taxon>
        <taxon>Batrachia</taxon>
        <taxon>Anura</taxon>
        <taxon>Neobatrachia</taxon>
        <taxon>Hyloidea</taxon>
        <taxon>Hylidae</taxon>
        <taxon>Pelodryadinae</taxon>
        <taxon>Litoria</taxon>
    </lineage>
</organism>
<reference evidence="5 6" key="1">
    <citation type="journal article" date="2008" name="Rapid Commun. Mass Spectrom.">
        <title>The fallaxidin peptides from the skin secretion of the eastern dwarf tree frog Litoria fallax. Sequence determination by positive and negative ion electrospray mass spectrometry: antimicrobial activity and cDNA cloning of the fallaxidins.</title>
        <authorList>
            <person name="Jackway R.J."/>
            <person name="Bowie J.H."/>
            <person name="Bilusich D."/>
            <person name="Musgrave I.F."/>
            <person name="Surinya-Johnson K.H."/>
            <person name="Tyler M.J."/>
            <person name="Eichinger P.C.H."/>
        </authorList>
    </citation>
    <scope>NUCLEOTIDE SEQUENCE [MRNA]</scope>
    <scope>PROTEIN SEQUENCE OF 47-67</scope>
    <scope>FUNCTION</scope>
    <scope>SUBCELLULAR LOCATION</scope>
    <scope>TISSUE SPECIFICITY</scope>
    <scope>MASS SPECTROMETRY</scope>
    <source>
        <tissue evidence="6">Skin</tissue>
        <tissue evidence="3">Skin secretion</tissue>
    </source>
</reference>
<name>FALX1_LITFA</name>
<feature type="signal peptide" evidence="1 6">
    <location>
        <begin position="1"/>
        <end position="22"/>
    </location>
</feature>
<feature type="propeptide" id="PRO_0000361700" evidence="3">
    <location>
        <begin position="23"/>
        <end position="46"/>
    </location>
</feature>
<feature type="peptide" id="PRO_0000361701" description="Fallaxidin-4.1">
    <location>
        <begin position="47"/>
        <end position="67"/>
    </location>
</feature>
<feature type="region of interest" description="Disordered" evidence="2">
    <location>
        <begin position="24"/>
        <end position="46"/>
    </location>
</feature>
<feature type="compositionally biased region" description="Acidic residues" evidence="2">
    <location>
        <begin position="30"/>
        <end position="42"/>
    </location>
</feature>
<proteinExistence type="evidence at protein level"/>
<accession>B5LUQ4</accession>
<protein>
    <recommendedName>
        <fullName evidence="4 6">Preprofallaxidin-1</fullName>
    </recommendedName>
    <component>
        <recommendedName>
            <fullName>Fallaxidin-4.1</fullName>
        </recommendedName>
    </component>
</protein>
<evidence type="ECO:0000255" key="1"/>
<evidence type="ECO:0000256" key="2">
    <source>
        <dbReference type="SAM" id="MobiDB-lite"/>
    </source>
</evidence>
<evidence type="ECO:0000269" key="3">
    <source>
    </source>
</evidence>
<evidence type="ECO:0000303" key="4">
    <source>
    </source>
</evidence>
<evidence type="ECO:0000305" key="5"/>
<evidence type="ECO:0000312" key="6">
    <source>
        <dbReference type="EMBL" id="ACH53447.1"/>
    </source>
</evidence>
<comment type="function">
    <text evidence="3">Fallaxidin-4.1 shows antibacterial activity against the Gram-positive bacteria L.lactis (MIC=12 uM), M.luteus (MIC=100 uM), S.epidermidis (MIC=100 uM) and S.uberis (MIC=50 uM). No antibacterial activity against the Gram-positive bacteria B.cereus, E.faecalis, L.innocua, S.aureus, or the Gram-negative bacteria E.cloacae and E.coli. Inhibits the formation of NO by neuronal nitric oxide synthase with an IC(50) of 13.3 uM.</text>
</comment>
<comment type="subcellular location">
    <subcellularLocation>
        <location evidence="3">Secreted</location>
    </subcellularLocation>
</comment>
<comment type="tissue specificity">
    <text evidence="3">Expressed by the skin glands.</text>
</comment>
<comment type="mass spectrometry" mass="2192.0" method="Electrospray" evidence="3"/>
<comment type="similarity">
    <text evidence="1">Belongs to the frog skin active peptide (FSAP) family. Brevinin subfamily.</text>
</comment>